<evidence type="ECO:0000250" key="1">
    <source>
        <dbReference type="UniProtKB" id="A8E1U5"/>
    </source>
</evidence>
<evidence type="ECO:0000250" key="2">
    <source>
        <dbReference type="UniProtKB" id="Q2G0X7"/>
    </source>
</evidence>
<evidence type="ECO:0000250" key="3">
    <source>
        <dbReference type="UniProtKB" id="Q2G1S8"/>
    </source>
</evidence>
<evidence type="ECO:0000255" key="4"/>
<evidence type="ECO:0000305" key="5"/>
<sequence>MKLKNIAKASLALGILTTGMITTTAQPVKASTLEVRSQATQDLSEYYNRPFFEYTNQSGYKEEGKVTFTPNYQLIDVTLTGNEKQNFGEDISNVDIFVVRENSDRSGNTASIGGITKTNGSNYIDKVKDVNLIITKNIDSVTSTSTSSTYTINKEEISLKELDFKLRKHLIDKHNLYKTEPKDSKIRITMKDGGFYTFELNKKLQTHRMGDVIDGRNIEKIEVNL</sequence>
<feature type="signal peptide" evidence="4">
    <location>
        <begin position="1"/>
        <end position="30"/>
    </location>
</feature>
<feature type="chain" id="PRO_5002613384" description="Superantigen-like protein 11" evidence="4">
    <location>
        <begin position="31"/>
        <end position="225"/>
    </location>
</feature>
<feature type="region of interest" description="Sialyl Lewis X-binding" evidence="2">
    <location>
        <begin position="94"/>
        <end position="196"/>
    </location>
</feature>
<name>SSL11_STAAE</name>
<accession>A0A0H3KEE7</accession>
<gene>
    <name evidence="1" type="primary">ssl11</name>
    <name type="ordered locus">NWMN_0400</name>
</gene>
<protein>
    <recommendedName>
        <fullName evidence="1">Superantigen-like protein 11</fullName>
    </recommendedName>
</protein>
<organism>
    <name type="scientific">Staphylococcus aureus (strain Newman)</name>
    <dbReference type="NCBI Taxonomy" id="426430"/>
    <lineage>
        <taxon>Bacteria</taxon>
        <taxon>Bacillati</taxon>
        <taxon>Bacillota</taxon>
        <taxon>Bacilli</taxon>
        <taxon>Bacillales</taxon>
        <taxon>Staphylococcaceae</taxon>
        <taxon>Staphylococcus</taxon>
    </lineage>
</organism>
<proteinExistence type="inferred from homology"/>
<reference key="1">
    <citation type="journal article" date="2008" name="J. Bacteriol.">
        <title>Genome sequence of Staphylococcus aureus strain Newman and comparative analysis of staphylococcal genomes: polymorphism and evolution of two major pathogenicity islands.</title>
        <authorList>
            <person name="Baba T."/>
            <person name="Bae T."/>
            <person name="Schneewind O."/>
            <person name="Takeuchi F."/>
            <person name="Hiramatsu K."/>
        </authorList>
    </citation>
    <scope>NUCLEOTIDE SEQUENCE [LARGE SCALE GENOMIC DNA]</scope>
    <source>
        <strain>Newman</strain>
    </source>
</reference>
<comment type="function">
    <text evidence="1">Secreted protein that plays a role in the inhibition of host immune system. Targets myeloid cells such as monocytes or granulocytes through binding with sialyllactosamine-containing glycoproteins. Prevents initial rolling of neutrophils toward the site of infection by interacting with host SELPLG. Disrupts neutrophil motility by induction of cell adhesion via interacting with glycans but independently of SELPLG.</text>
</comment>
<comment type="subunit">
    <text evidence="1">Homodimer (via its C-terminal domain). Interacts with host FCAR and SELPLG (via sialyl Lewis X).</text>
</comment>
<comment type="subcellular location">
    <subcellularLocation>
        <location evidence="3">Secreted</location>
    </subcellularLocation>
</comment>
<comment type="domain">
    <text evidence="2">The C-terminal domain contains a V-shape binding site for sialyl Lewis X.</text>
</comment>
<comment type="similarity">
    <text evidence="5">Belongs to the staphylococcal/streptococcal toxin family.</text>
</comment>
<keyword id="KW-0964">Secreted</keyword>
<keyword id="KW-0732">Signal</keyword>
<keyword id="KW-0843">Virulence</keyword>
<dbReference type="EMBL" id="AP009351">
    <property type="protein sequence ID" value="BAF66672.1"/>
    <property type="molecule type" value="Genomic_DNA"/>
</dbReference>
<dbReference type="RefSeq" id="WP_000769163.1">
    <property type="nucleotide sequence ID" value="NZ_JBBIAE010000014.1"/>
</dbReference>
<dbReference type="SMR" id="A0A0H3KEE7"/>
<dbReference type="KEGG" id="sae:NWMN_0400"/>
<dbReference type="HOGENOM" id="CLU_054950_1_0_9"/>
<dbReference type="Proteomes" id="UP000006386">
    <property type="component" value="Chromosome"/>
</dbReference>
<dbReference type="GO" id="GO:0005576">
    <property type="term" value="C:extracellular region"/>
    <property type="evidence" value="ECO:0007669"/>
    <property type="project" value="UniProtKB-SubCell"/>
</dbReference>
<dbReference type="Gene3D" id="2.40.50.110">
    <property type="match status" value="1"/>
</dbReference>
<dbReference type="Gene3D" id="3.10.20.120">
    <property type="match status" value="1"/>
</dbReference>
<dbReference type="InterPro" id="IPR008992">
    <property type="entry name" value="Enterotoxin"/>
</dbReference>
<dbReference type="InterPro" id="IPR015282">
    <property type="entry name" value="SSL_OB"/>
</dbReference>
<dbReference type="InterPro" id="IPR006126">
    <property type="entry name" value="Staph/Strept_toxin_CS"/>
</dbReference>
<dbReference type="InterPro" id="IPR008375">
    <property type="entry name" value="Staph_exotoxin"/>
</dbReference>
<dbReference type="InterPro" id="IPR016091">
    <property type="entry name" value="SuperAg_toxin_C"/>
</dbReference>
<dbReference type="InterPro" id="IPR013307">
    <property type="entry name" value="Superantigen_bac"/>
</dbReference>
<dbReference type="InterPro" id="IPR006123">
    <property type="entry name" value="Toxin_b-grasp_Staph/Strep"/>
</dbReference>
<dbReference type="NCBIfam" id="NF009594">
    <property type="entry name" value="PRK13036.1"/>
    <property type="match status" value="1"/>
</dbReference>
<dbReference type="Pfam" id="PF09199">
    <property type="entry name" value="SSL_OB"/>
    <property type="match status" value="1"/>
</dbReference>
<dbReference type="Pfam" id="PF02876">
    <property type="entry name" value="Stap_Strp_tox_C"/>
    <property type="match status" value="1"/>
</dbReference>
<dbReference type="PRINTS" id="PR01898">
    <property type="entry name" value="SAGSUPRFAMLY"/>
</dbReference>
<dbReference type="PRINTS" id="PR01800">
    <property type="entry name" value="STAPHEXOTOXN"/>
</dbReference>
<dbReference type="PRINTS" id="PR01501">
    <property type="entry name" value="TOXICSSTOXIN"/>
</dbReference>
<dbReference type="SUPFAM" id="SSF50203">
    <property type="entry name" value="Bacterial enterotoxins"/>
    <property type="match status" value="1"/>
</dbReference>
<dbReference type="SUPFAM" id="SSF54334">
    <property type="entry name" value="Superantigen toxins, C-terminal domain"/>
    <property type="match status" value="1"/>
</dbReference>
<dbReference type="PROSITE" id="PS00278">
    <property type="entry name" value="STAPH_STREP_TOXIN_2"/>
    <property type="match status" value="1"/>
</dbReference>